<feature type="chain" id="PRO_0000219497" description="Delta(24)-sterol reductase homolog dhcr-24">
    <location>
        <begin position="1"/>
        <end position="525"/>
    </location>
</feature>
<feature type="transmembrane region" description="Helical" evidence="3">
    <location>
        <begin position="27"/>
        <end position="47"/>
    </location>
</feature>
<feature type="transmembrane region" description="Helical" evidence="3">
    <location>
        <begin position="214"/>
        <end position="234"/>
    </location>
</feature>
<feature type="domain" description="FAD-binding PCMH-type" evidence="4">
    <location>
        <begin position="47"/>
        <end position="239"/>
    </location>
</feature>
<sequence length="525" mass="61421">MNLVDEKDEKPTRWEKCVEFIMFHFRWVFVVPFLLPLSFLFNTVFDFRNRIVHAVNSAPNAHVRKVKHIQEQLKEWNDNGRKSKLVNARPGWLTMSFRFPLYKENATKIATDKLFDILDLDVEKMTVKAEPGVTMGQLSQYLISRGYTLPVLPELDDLTVGGLINGCGVESGSFKYGMFQHICTGYEVVMSDGELKNVYPDSAAKTEQAKQDNSLFFAIPWSQGTICFLVAATIKIIPCKKYVKLTYKKTETLSEMCEQLTEDSDRNSENVDFVEALMFNKEKGCIMLGEFSDGPDTHDEVVNPIGRWYKKWFYTHVEDLINKKHESIEYIPLRDYYHRHSKSIFWELRDIVPFGNNVLFRYLMAWMCPPKIAFLKATTPNVLRKLYDRSHVLQDMLVPLDKLEECIDLFHKEVEIYPMWLCPFYLKSQPGLMKLRNATHKMYVDVGAYGVTSKDGYHHERTTRRLESFVRSVNGFQMTYADIYMTRAEYAEMFDRTLYDWKRASCKCIDAFPDIYDKICRSGRR</sequence>
<gene>
    <name evidence="6" type="primary">dhcr-24</name>
    <name evidence="6" type="ORF">F52H2.6</name>
</gene>
<organism>
    <name type="scientific">Caenorhabditis elegans</name>
    <dbReference type="NCBI Taxonomy" id="6239"/>
    <lineage>
        <taxon>Eukaryota</taxon>
        <taxon>Metazoa</taxon>
        <taxon>Ecdysozoa</taxon>
        <taxon>Nematoda</taxon>
        <taxon>Chromadorea</taxon>
        <taxon>Rhabditida</taxon>
        <taxon>Rhabditina</taxon>
        <taxon>Rhabditomorpha</taxon>
        <taxon>Rhabditoidea</taxon>
        <taxon>Rhabditidae</taxon>
        <taxon>Peloderinae</taxon>
        <taxon>Caenorhabditis</taxon>
    </lineage>
</organism>
<evidence type="ECO:0000250" key="1">
    <source>
        <dbReference type="UniProtKB" id="Q15392"/>
    </source>
</evidence>
<evidence type="ECO:0000250" key="2">
    <source>
        <dbReference type="UniProtKB" id="Q8VCH6"/>
    </source>
</evidence>
<evidence type="ECO:0000255" key="3"/>
<evidence type="ECO:0000255" key="4">
    <source>
        <dbReference type="PROSITE-ProRule" id="PRU00718"/>
    </source>
</evidence>
<evidence type="ECO:0000305" key="5"/>
<evidence type="ECO:0000312" key="6">
    <source>
        <dbReference type="WormBase" id="F52H2.6"/>
    </source>
</evidence>
<reference key="1">
    <citation type="journal article" date="1998" name="Science">
        <title>Genome sequence of the nematode C. elegans: a platform for investigating biology.</title>
        <authorList>
            <consortium name="The C. elegans sequencing consortium"/>
        </authorList>
    </citation>
    <scope>NUCLEOTIDE SEQUENCE [LARGE SCALE GENOMIC DNA]</scope>
    <source>
        <strain>Bristol N2</strain>
    </source>
</reference>
<proteinExistence type="inferred from homology"/>
<comment type="function">
    <text evidence="1">Catalyzes the reduction of the delta-24 double bond of sterol intermediates during cholesterol biosynthesis.</text>
</comment>
<comment type="catalytic activity">
    <reaction evidence="1">
        <text>cholesterol + NADP(+) = desmosterol + NADPH + H(+)</text>
        <dbReference type="Rhea" id="RHEA:36391"/>
        <dbReference type="ChEBI" id="CHEBI:15378"/>
        <dbReference type="ChEBI" id="CHEBI:16113"/>
        <dbReference type="ChEBI" id="CHEBI:17737"/>
        <dbReference type="ChEBI" id="CHEBI:57783"/>
        <dbReference type="ChEBI" id="CHEBI:58349"/>
        <dbReference type="EC" id="1.3.1.72"/>
    </reaction>
</comment>
<comment type="catalytic activity">
    <reaction evidence="1">
        <text>lanosterol + NADPH + H(+) = 24,25-dihydrolanosterol + NADP(+)</text>
        <dbReference type="Rhea" id="RHEA:33919"/>
        <dbReference type="ChEBI" id="CHEBI:15378"/>
        <dbReference type="ChEBI" id="CHEBI:16521"/>
        <dbReference type="ChEBI" id="CHEBI:28113"/>
        <dbReference type="ChEBI" id="CHEBI:57783"/>
        <dbReference type="ChEBI" id="CHEBI:58349"/>
    </reaction>
    <physiologicalReaction direction="left-to-right" evidence="1">
        <dbReference type="Rhea" id="RHEA:33920"/>
    </physiologicalReaction>
</comment>
<comment type="catalytic activity">
    <reaction evidence="2">
        <text>5alpha-cholest-8-en-3beta-ol + NADP(+) = zymosterol + NADPH + H(+)</text>
        <dbReference type="Rhea" id="RHEA:36399"/>
        <dbReference type="ChEBI" id="CHEBI:15378"/>
        <dbReference type="ChEBI" id="CHEBI:16608"/>
        <dbReference type="ChEBI" id="CHEBI:18252"/>
        <dbReference type="ChEBI" id="CHEBI:57783"/>
        <dbReference type="ChEBI" id="CHEBI:58349"/>
        <dbReference type="EC" id="1.3.1.72"/>
    </reaction>
    <physiologicalReaction direction="right-to-left" evidence="2">
        <dbReference type="Rhea" id="RHEA:36401"/>
    </physiologicalReaction>
</comment>
<comment type="cofactor">
    <cofactor evidence="1">
        <name>FAD</name>
        <dbReference type="ChEBI" id="CHEBI:57692"/>
    </cofactor>
</comment>
<comment type="pathway">
    <text evidence="1">Steroid biosynthesis; cholesterol biosynthesis.</text>
</comment>
<comment type="subcellular location">
    <subcellularLocation>
        <location evidence="1">Endoplasmic reticulum membrane</location>
        <topology evidence="3">Single-pass membrane protein</topology>
    </subcellularLocation>
    <subcellularLocation>
        <location evidence="1">Golgi apparatus membrane</location>
        <topology evidence="3">Single-pass membrane protein</topology>
    </subcellularLocation>
</comment>
<comment type="similarity">
    <text evidence="5">Belongs to the FAD-binding oxidoreductase/transferase type 4 family.</text>
</comment>
<name>DHC24_CAEEL</name>
<keyword id="KW-0256">Endoplasmic reticulum</keyword>
<keyword id="KW-0333">Golgi apparatus</keyword>
<keyword id="KW-0472">Membrane</keyword>
<keyword id="KW-0560">Oxidoreductase</keyword>
<keyword id="KW-1185">Reference proteome</keyword>
<keyword id="KW-0812">Transmembrane</keyword>
<keyword id="KW-1133">Transmembrane helix</keyword>
<dbReference type="EC" id="1.3.1.72" evidence="1"/>
<dbReference type="EMBL" id="FO081446">
    <property type="protein sequence ID" value="CCD71661.1"/>
    <property type="molecule type" value="Genomic_DNA"/>
</dbReference>
<dbReference type="PIR" id="T32481">
    <property type="entry name" value="T32481"/>
</dbReference>
<dbReference type="FunCoup" id="O17397">
    <property type="interactions" value="406"/>
</dbReference>
<dbReference type="STRING" id="6239.F52H2.6.1"/>
<dbReference type="PaxDb" id="6239-F52H2.6"/>
<dbReference type="PeptideAtlas" id="O17397"/>
<dbReference type="EnsemblMetazoa" id="F52H2.6a.1">
    <property type="protein sequence ID" value="F52H2.6a.1"/>
    <property type="gene ID" value="WBGene00018718"/>
</dbReference>
<dbReference type="KEGG" id="cel:CELE_F52H2.6"/>
<dbReference type="UCSC" id="F52H2.6">
    <property type="organism name" value="c. elegans"/>
</dbReference>
<dbReference type="AGR" id="WB:WBGene00018718"/>
<dbReference type="CTD" id="186134"/>
<dbReference type="WormBase" id="F52H2.6">
    <property type="protein sequence ID" value="CE10874"/>
    <property type="gene ID" value="WBGene00018718"/>
    <property type="gene designation" value="dhcr-24"/>
</dbReference>
<dbReference type="eggNOG" id="KOG1262">
    <property type="taxonomic scope" value="Eukaryota"/>
</dbReference>
<dbReference type="GeneTree" id="ENSGT00390000008338"/>
<dbReference type="HOGENOM" id="CLU_025883_4_0_1"/>
<dbReference type="InParanoid" id="O17397"/>
<dbReference type="OMA" id="WVGRSAF"/>
<dbReference type="OrthoDB" id="415825at2759"/>
<dbReference type="PhylomeDB" id="O17397"/>
<dbReference type="Reactome" id="R-CEL-191273">
    <property type="pathway name" value="Cholesterol biosynthesis"/>
</dbReference>
<dbReference type="Reactome" id="R-CEL-6807047">
    <property type="pathway name" value="Cholesterol biosynthesis via desmosterol"/>
</dbReference>
<dbReference type="Reactome" id="R-CEL-6807062">
    <property type="pathway name" value="Cholesterol biosynthesis via lathosterol"/>
</dbReference>
<dbReference type="UniPathway" id="UPA00063"/>
<dbReference type="PRO" id="PR:O17397"/>
<dbReference type="Proteomes" id="UP000001940">
    <property type="component" value="Chromosome X"/>
</dbReference>
<dbReference type="Bgee" id="WBGene00018718">
    <property type="expression patterns" value="Expressed in pharyngeal muscle cell (C elegans) and 3 other cell types or tissues"/>
</dbReference>
<dbReference type="ExpressionAtlas" id="O17397">
    <property type="expression patterns" value="baseline and differential"/>
</dbReference>
<dbReference type="GO" id="GO:0005737">
    <property type="term" value="C:cytoplasm"/>
    <property type="evidence" value="ECO:0000318"/>
    <property type="project" value="GO_Central"/>
</dbReference>
<dbReference type="GO" id="GO:0000246">
    <property type="term" value="F:Delta24(24-1) sterol reductase activity"/>
    <property type="evidence" value="ECO:0000318"/>
    <property type="project" value="GO_Central"/>
</dbReference>
<dbReference type="GO" id="GO:0071949">
    <property type="term" value="F:FAD binding"/>
    <property type="evidence" value="ECO:0007669"/>
    <property type="project" value="InterPro"/>
</dbReference>
<dbReference type="GO" id="GO:0008202">
    <property type="term" value="P:steroid metabolic process"/>
    <property type="evidence" value="ECO:0000318"/>
    <property type="project" value="GO_Central"/>
</dbReference>
<dbReference type="Gene3D" id="3.30.465.10">
    <property type="match status" value="1"/>
</dbReference>
<dbReference type="InterPro" id="IPR040165">
    <property type="entry name" value="Diminuto-like"/>
</dbReference>
<dbReference type="InterPro" id="IPR016166">
    <property type="entry name" value="FAD-bd_PCMH"/>
</dbReference>
<dbReference type="InterPro" id="IPR036318">
    <property type="entry name" value="FAD-bd_PCMH-like_sf"/>
</dbReference>
<dbReference type="InterPro" id="IPR016169">
    <property type="entry name" value="FAD-bd_PCMH_sub2"/>
</dbReference>
<dbReference type="InterPro" id="IPR006094">
    <property type="entry name" value="Oxid_FAD_bind_N"/>
</dbReference>
<dbReference type="PANTHER" id="PTHR10801">
    <property type="entry name" value="24-DEHYDROCHOLESTEROL REDUCTASE"/>
    <property type="match status" value="1"/>
</dbReference>
<dbReference type="PANTHER" id="PTHR10801:SF0">
    <property type="entry name" value="DELTA(24)-STEROL REDUCTASE"/>
    <property type="match status" value="1"/>
</dbReference>
<dbReference type="Pfam" id="PF01565">
    <property type="entry name" value="FAD_binding_4"/>
    <property type="match status" value="1"/>
</dbReference>
<dbReference type="SUPFAM" id="SSF56176">
    <property type="entry name" value="FAD-binding/transporter-associated domain-like"/>
    <property type="match status" value="1"/>
</dbReference>
<dbReference type="PROSITE" id="PS51387">
    <property type="entry name" value="FAD_PCMH"/>
    <property type="match status" value="1"/>
</dbReference>
<accession>O17397</accession>
<protein>
    <recommendedName>
        <fullName evidence="1">Delta(24)-sterol reductase homolog dhcr-24</fullName>
        <ecNumber evidence="1">1.3.1.72</ecNumber>
    </recommendedName>
    <alternativeName>
        <fullName evidence="6">Dehydrocholesterol reductase dhcr-24</fullName>
    </alternativeName>
    <alternativeName>
        <fullName evidence="5">Diminuto-like protein</fullName>
    </alternativeName>
</protein>